<evidence type="ECO:0000255" key="1">
    <source>
        <dbReference type="HAMAP-Rule" id="MF_01347"/>
    </source>
</evidence>
<evidence type="ECO:0000256" key="2">
    <source>
        <dbReference type="SAM" id="MobiDB-lite"/>
    </source>
</evidence>
<keyword id="KW-0066">ATP synthesis</keyword>
<keyword id="KW-0067">ATP-binding</keyword>
<keyword id="KW-0997">Cell inner membrane</keyword>
<keyword id="KW-1003">Cell membrane</keyword>
<keyword id="KW-0139">CF(1)</keyword>
<keyword id="KW-0375">Hydrogen ion transport</keyword>
<keyword id="KW-0406">Ion transport</keyword>
<keyword id="KW-0472">Membrane</keyword>
<keyword id="KW-0547">Nucleotide-binding</keyword>
<keyword id="KW-1278">Translocase</keyword>
<keyword id="KW-0813">Transport</keyword>
<name>ATPB2_BURM7</name>
<accession>A3MAR7</accession>
<sequence length="534" mass="55380">MADPQATNGTGAVCAERDASDVGDVSDVGDARDEGAGRVVAVRGAVVDVAFDGGALPALNEALTIPVDGAAPILAEVHAHLSDAAVRALALGPTGGLRRGAAVRATGGPIRVPVGDAVLGRLLSVTGAPGDDGAALAADVERRPIHRGAPLLAEQKSANALFATGIKVIDLLAPLAQGGKAAMFGGAGVGKTVFVMELIHAMVERYRGISVFAGIGERSREGHEMLLDMRGSGVLGRTVLVYGQMNEPPGARWRVPLTALAIAEYFRDERAQNVLLLMDNVFRFVQAGAEVSGLLGRLPSRVGYQPTLASEVAALQERIASVEGAAVTAIEAVYVPADDFTDPAVTAIAAHVDSMVVLSRAMAAEGMYPAIDPVASSSILLDPLVVGEAHVEVAIEVRRVIEHYRELQDVIALLGIDELGADDRRLVGRARRLQRFLTQPFAVTEAFTGQAGASVEIADTIAGCRAILRGDCDDWRESSLYMVGTLDDARRKEAAAREADARREAAAAASGAGPGTTSDPASGSAEPQGARHGR</sequence>
<comment type="function">
    <text evidence="1">Produces ATP from ADP in the presence of a proton gradient across the membrane. The catalytic sites are hosted primarily by the beta subunits.</text>
</comment>
<comment type="catalytic activity">
    <reaction evidence="1">
        <text>ATP + H2O + 4 H(+)(in) = ADP + phosphate + 5 H(+)(out)</text>
        <dbReference type="Rhea" id="RHEA:57720"/>
        <dbReference type="ChEBI" id="CHEBI:15377"/>
        <dbReference type="ChEBI" id="CHEBI:15378"/>
        <dbReference type="ChEBI" id="CHEBI:30616"/>
        <dbReference type="ChEBI" id="CHEBI:43474"/>
        <dbReference type="ChEBI" id="CHEBI:456216"/>
        <dbReference type="EC" id="7.1.2.2"/>
    </reaction>
</comment>
<comment type="subunit">
    <text evidence="1">F-type ATPases have 2 components, CF(1) - the catalytic core - and CF(0) - the membrane proton channel. CF(1) has five subunits: alpha(3), beta(3), gamma(1), delta(1), epsilon(1). CF(0) has three main subunits: a(1), b(2) and c(9-12). The alpha and beta chains form an alternating ring which encloses part of the gamma chain. CF(1) is attached to CF(0) by a central stalk formed by the gamma and epsilon chains, while a peripheral stalk is formed by the delta and b chains.</text>
</comment>
<comment type="subcellular location">
    <subcellularLocation>
        <location evidence="1">Cell inner membrane</location>
        <topology evidence="1">Peripheral membrane protein</topology>
    </subcellularLocation>
</comment>
<comment type="similarity">
    <text evidence="1">Belongs to the ATPase alpha/beta chains family.</text>
</comment>
<feature type="chain" id="PRO_0000339489" description="ATP synthase subunit beta 2">
    <location>
        <begin position="1"/>
        <end position="534"/>
    </location>
</feature>
<feature type="region of interest" description="Disordered" evidence="2">
    <location>
        <begin position="494"/>
        <end position="534"/>
    </location>
</feature>
<feature type="compositionally biased region" description="Basic and acidic residues" evidence="2">
    <location>
        <begin position="494"/>
        <end position="505"/>
    </location>
</feature>
<feature type="binding site" evidence="1">
    <location>
        <begin position="185"/>
        <end position="192"/>
    </location>
    <ligand>
        <name>ATP</name>
        <dbReference type="ChEBI" id="CHEBI:30616"/>
    </ligand>
</feature>
<gene>
    <name evidence="1" type="primary">atpD2</name>
    <name type="ordered locus">BMA10247_A0147</name>
</gene>
<dbReference type="EC" id="7.1.2.2" evidence="1"/>
<dbReference type="EMBL" id="CP000547">
    <property type="protein sequence ID" value="ABO02130.1"/>
    <property type="molecule type" value="Genomic_DNA"/>
</dbReference>
<dbReference type="SMR" id="A3MAR7"/>
<dbReference type="KEGG" id="bmaz:BM44_3547"/>
<dbReference type="KEGG" id="bmn:BMA10247_A0147"/>
<dbReference type="PATRIC" id="fig|320389.8.peg.3998"/>
<dbReference type="GO" id="GO:0005886">
    <property type="term" value="C:plasma membrane"/>
    <property type="evidence" value="ECO:0007669"/>
    <property type="project" value="UniProtKB-SubCell"/>
</dbReference>
<dbReference type="GO" id="GO:0045259">
    <property type="term" value="C:proton-transporting ATP synthase complex"/>
    <property type="evidence" value="ECO:0007669"/>
    <property type="project" value="UniProtKB-KW"/>
</dbReference>
<dbReference type="GO" id="GO:0005524">
    <property type="term" value="F:ATP binding"/>
    <property type="evidence" value="ECO:0007669"/>
    <property type="project" value="UniProtKB-UniRule"/>
</dbReference>
<dbReference type="GO" id="GO:0016887">
    <property type="term" value="F:ATP hydrolysis activity"/>
    <property type="evidence" value="ECO:0007669"/>
    <property type="project" value="InterPro"/>
</dbReference>
<dbReference type="GO" id="GO:0046933">
    <property type="term" value="F:proton-transporting ATP synthase activity, rotational mechanism"/>
    <property type="evidence" value="ECO:0007669"/>
    <property type="project" value="UniProtKB-UniRule"/>
</dbReference>
<dbReference type="CDD" id="cd18110">
    <property type="entry name" value="ATP-synt_F1_beta_C"/>
    <property type="match status" value="1"/>
</dbReference>
<dbReference type="CDD" id="cd01133">
    <property type="entry name" value="F1-ATPase_beta_CD"/>
    <property type="match status" value="1"/>
</dbReference>
<dbReference type="Gene3D" id="2.40.10.170">
    <property type="match status" value="1"/>
</dbReference>
<dbReference type="Gene3D" id="1.10.1140.10">
    <property type="entry name" value="Bovine Mitochondrial F1-atpase, Atp Synthase Beta Chain, Chain D, domain 3"/>
    <property type="match status" value="1"/>
</dbReference>
<dbReference type="Gene3D" id="3.40.50.300">
    <property type="entry name" value="P-loop containing nucleotide triphosphate hydrolases"/>
    <property type="match status" value="1"/>
</dbReference>
<dbReference type="HAMAP" id="MF_01347">
    <property type="entry name" value="ATP_synth_beta_bact"/>
    <property type="match status" value="1"/>
</dbReference>
<dbReference type="InterPro" id="IPR003593">
    <property type="entry name" value="AAA+_ATPase"/>
</dbReference>
<dbReference type="InterPro" id="IPR055190">
    <property type="entry name" value="ATP-synt_VA_C"/>
</dbReference>
<dbReference type="InterPro" id="IPR005722">
    <property type="entry name" value="ATP_synth_F1_bsu"/>
</dbReference>
<dbReference type="InterPro" id="IPR020003">
    <property type="entry name" value="ATPase_a/bsu_AS"/>
</dbReference>
<dbReference type="InterPro" id="IPR050053">
    <property type="entry name" value="ATPase_alpha/beta_chains"/>
</dbReference>
<dbReference type="InterPro" id="IPR004100">
    <property type="entry name" value="ATPase_F1/V1/A1_a/bsu_N"/>
</dbReference>
<dbReference type="InterPro" id="IPR036121">
    <property type="entry name" value="ATPase_F1/V1/A1_a/bsu_N_sf"/>
</dbReference>
<dbReference type="InterPro" id="IPR000194">
    <property type="entry name" value="ATPase_F1/V1/A1_a/bsu_nucl-bd"/>
</dbReference>
<dbReference type="InterPro" id="IPR024034">
    <property type="entry name" value="ATPase_F1/V1_b/a_C"/>
</dbReference>
<dbReference type="InterPro" id="IPR027417">
    <property type="entry name" value="P-loop_NTPase"/>
</dbReference>
<dbReference type="NCBIfam" id="TIGR01039">
    <property type="entry name" value="atpD"/>
    <property type="match status" value="1"/>
</dbReference>
<dbReference type="PANTHER" id="PTHR15184">
    <property type="entry name" value="ATP SYNTHASE"/>
    <property type="match status" value="1"/>
</dbReference>
<dbReference type="PANTHER" id="PTHR15184:SF71">
    <property type="entry name" value="ATP SYNTHASE SUBUNIT BETA, MITOCHONDRIAL"/>
    <property type="match status" value="1"/>
</dbReference>
<dbReference type="Pfam" id="PF00006">
    <property type="entry name" value="ATP-synt_ab"/>
    <property type="match status" value="1"/>
</dbReference>
<dbReference type="Pfam" id="PF02874">
    <property type="entry name" value="ATP-synt_ab_N"/>
    <property type="match status" value="1"/>
</dbReference>
<dbReference type="Pfam" id="PF22919">
    <property type="entry name" value="ATP-synt_VA_C"/>
    <property type="match status" value="1"/>
</dbReference>
<dbReference type="SMART" id="SM00382">
    <property type="entry name" value="AAA"/>
    <property type="match status" value="1"/>
</dbReference>
<dbReference type="SUPFAM" id="SSF47917">
    <property type="entry name" value="C-terminal domain of alpha and beta subunits of F1 ATP synthase"/>
    <property type="match status" value="1"/>
</dbReference>
<dbReference type="SUPFAM" id="SSF50615">
    <property type="entry name" value="N-terminal domain of alpha and beta subunits of F1 ATP synthase"/>
    <property type="match status" value="1"/>
</dbReference>
<dbReference type="SUPFAM" id="SSF52540">
    <property type="entry name" value="P-loop containing nucleoside triphosphate hydrolases"/>
    <property type="match status" value="1"/>
</dbReference>
<dbReference type="PROSITE" id="PS00152">
    <property type="entry name" value="ATPASE_ALPHA_BETA"/>
    <property type="match status" value="1"/>
</dbReference>
<protein>
    <recommendedName>
        <fullName evidence="1">ATP synthase subunit beta 2</fullName>
        <ecNumber evidence="1">7.1.2.2</ecNumber>
    </recommendedName>
    <alternativeName>
        <fullName evidence="1">ATP synthase F1 sector subunit beta 2</fullName>
    </alternativeName>
    <alternativeName>
        <fullName evidence="1">F-ATPase subunit beta 2</fullName>
    </alternativeName>
</protein>
<proteinExistence type="inferred from homology"/>
<organism>
    <name type="scientific">Burkholderia mallei (strain NCTC 10247)</name>
    <dbReference type="NCBI Taxonomy" id="320389"/>
    <lineage>
        <taxon>Bacteria</taxon>
        <taxon>Pseudomonadati</taxon>
        <taxon>Pseudomonadota</taxon>
        <taxon>Betaproteobacteria</taxon>
        <taxon>Burkholderiales</taxon>
        <taxon>Burkholderiaceae</taxon>
        <taxon>Burkholderia</taxon>
        <taxon>pseudomallei group</taxon>
    </lineage>
</organism>
<reference key="1">
    <citation type="journal article" date="2010" name="Genome Biol. Evol.">
        <title>Continuing evolution of Burkholderia mallei through genome reduction and large-scale rearrangements.</title>
        <authorList>
            <person name="Losada L."/>
            <person name="Ronning C.M."/>
            <person name="DeShazer D."/>
            <person name="Woods D."/>
            <person name="Fedorova N."/>
            <person name="Kim H.S."/>
            <person name="Shabalina S.A."/>
            <person name="Pearson T.R."/>
            <person name="Brinkac L."/>
            <person name="Tan P."/>
            <person name="Nandi T."/>
            <person name="Crabtree J."/>
            <person name="Badger J."/>
            <person name="Beckstrom-Sternberg S."/>
            <person name="Saqib M."/>
            <person name="Schutzer S.E."/>
            <person name="Keim P."/>
            <person name="Nierman W.C."/>
        </authorList>
    </citation>
    <scope>NUCLEOTIDE SEQUENCE [LARGE SCALE GENOMIC DNA]</scope>
    <source>
        <strain>NCTC 10247</strain>
    </source>
</reference>